<evidence type="ECO:0000255" key="1">
    <source>
        <dbReference type="HAMAP-Rule" id="MF_00715"/>
    </source>
</evidence>
<evidence type="ECO:0000256" key="2">
    <source>
        <dbReference type="SAM" id="MobiDB-lite"/>
    </source>
</evidence>
<evidence type="ECO:0000305" key="3"/>
<keyword id="KW-1185">Reference proteome</keyword>
<feature type="chain" id="PRO_0000209224" description="Protein SlyX">
    <location>
        <begin position="1"/>
        <end position="72"/>
    </location>
</feature>
<feature type="region of interest" description="Disordered" evidence="2">
    <location>
        <begin position="52"/>
        <end position="72"/>
    </location>
</feature>
<feature type="compositionally biased region" description="Polar residues" evidence="2">
    <location>
        <begin position="55"/>
        <end position="65"/>
    </location>
</feature>
<proteinExistence type="inferred from homology"/>
<dbReference type="EMBL" id="AL590842">
    <property type="protein sequence ID" value="CAL18878.1"/>
    <property type="status" value="ALT_INIT"/>
    <property type="molecule type" value="Genomic_DNA"/>
</dbReference>
<dbReference type="EMBL" id="AE009952">
    <property type="protein sequence ID" value="AAM87520.1"/>
    <property type="molecule type" value="Genomic_DNA"/>
</dbReference>
<dbReference type="EMBL" id="AE017042">
    <property type="protein sequence ID" value="AAS60469.1"/>
    <property type="molecule type" value="Genomic_DNA"/>
</dbReference>
<dbReference type="PIR" id="AE0024">
    <property type="entry name" value="AE0024"/>
</dbReference>
<dbReference type="RefSeq" id="WP_002212317.1">
    <property type="nucleotide sequence ID" value="NZ_WUCM01000004.1"/>
</dbReference>
<dbReference type="SMR" id="Q8ZJC1"/>
<dbReference type="STRING" id="214092.YPO0194"/>
<dbReference type="PaxDb" id="214092-YPO0194"/>
<dbReference type="DNASU" id="1148923"/>
<dbReference type="EnsemblBacteria" id="AAS60469">
    <property type="protein sequence ID" value="AAS60469"/>
    <property type="gene ID" value="YP_0193"/>
</dbReference>
<dbReference type="KEGG" id="ype:YPO0194"/>
<dbReference type="KEGG" id="ypk:y3976"/>
<dbReference type="KEGG" id="ypm:YP_0193"/>
<dbReference type="eggNOG" id="COG2900">
    <property type="taxonomic scope" value="Bacteria"/>
</dbReference>
<dbReference type="HOGENOM" id="CLU_180796_4_2_6"/>
<dbReference type="OMA" id="CQLAFQE"/>
<dbReference type="OrthoDB" id="5771733at2"/>
<dbReference type="Proteomes" id="UP000000815">
    <property type="component" value="Chromosome"/>
</dbReference>
<dbReference type="Proteomes" id="UP000001019">
    <property type="component" value="Chromosome"/>
</dbReference>
<dbReference type="Proteomes" id="UP000002490">
    <property type="component" value="Chromosome"/>
</dbReference>
<dbReference type="Gene3D" id="1.20.5.300">
    <property type="match status" value="1"/>
</dbReference>
<dbReference type="HAMAP" id="MF_00715">
    <property type="entry name" value="SlyX"/>
    <property type="match status" value="1"/>
</dbReference>
<dbReference type="InterPro" id="IPR007236">
    <property type="entry name" value="SlyX"/>
</dbReference>
<dbReference type="NCBIfam" id="NF002750">
    <property type="entry name" value="PRK02793.1"/>
    <property type="match status" value="1"/>
</dbReference>
<dbReference type="PANTHER" id="PTHR36508">
    <property type="entry name" value="PROTEIN SLYX"/>
    <property type="match status" value="1"/>
</dbReference>
<dbReference type="PANTHER" id="PTHR36508:SF1">
    <property type="entry name" value="PROTEIN SLYX"/>
    <property type="match status" value="1"/>
</dbReference>
<dbReference type="Pfam" id="PF04102">
    <property type="entry name" value="SlyX"/>
    <property type="match status" value="1"/>
</dbReference>
<sequence>MEQSLLEQRLEMLESRLAFQEVTIEELNLIVTEHQMEMTKLREHLRLLTDKLRESQSSMLASPSEETPPPHY</sequence>
<gene>
    <name evidence="1" type="primary">slyX</name>
    <name type="ordered locus">YPO0194</name>
    <name type="ordered locus">y3976</name>
    <name type="ordered locus">YP_0193</name>
</gene>
<organism>
    <name type="scientific">Yersinia pestis</name>
    <dbReference type="NCBI Taxonomy" id="632"/>
    <lineage>
        <taxon>Bacteria</taxon>
        <taxon>Pseudomonadati</taxon>
        <taxon>Pseudomonadota</taxon>
        <taxon>Gammaproteobacteria</taxon>
        <taxon>Enterobacterales</taxon>
        <taxon>Yersiniaceae</taxon>
        <taxon>Yersinia</taxon>
    </lineage>
</organism>
<name>SLYX_YERPE</name>
<protein>
    <recommendedName>
        <fullName evidence="1">Protein SlyX</fullName>
    </recommendedName>
</protein>
<comment type="similarity">
    <text evidence="1">Belongs to the SlyX family.</text>
</comment>
<comment type="sequence caution" evidence="3">
    <conflict type="erroneous initiation">
        <sequence resource="EMBL-CDS" id="CAL18878"/>
    </conflict>
</comment>
<accession>Q8ZJC1</accession>
<accession>Q0WKB2</accession>
<accession>Q8CZI9</accession>
<reference key="1">
    <citation type="journal article" date="2001" name="Nature">
        <title>Genome sequence of Yersinia pestis, the causative agent of plague.</title>
        <authorList>
            <person name="Parkhill J."/>
            <person name="Wren B.W."/>
            <person name="Thomson N.R."/>
            <person name="Titball R.W."/>
            <person name="Holden M.T.G."/>
            <person name="Prentice M.B."/>
            <person name="Sebaihia M."/>
            <person name="James K.D."/>
            <person name="Churcher C.M."/>
            <person name="Mungall K.L."/>
            <person name="Baker S."/>
            <person name="Basham D."/>
            <person name="Bentley S.D."/>
            <person name="Brooks K."/>
            <person name="Cerdeno-Tarraga A.-M."/>
            <person name="Chillingworth T."/>
            <person name="Cronin A."/>
            <person name="Davies R.M."/>
            <person name="Davis P."/>
            <person name="Dougan G."/>
            <person name="Feltwell T."/>
            <person name="Hamlin N."/>
            <person name="Holroyd S."/>
            <person name="Jagels K."/>
            <person name="Karlyshev A.V."/>
            <person name="Leather S."/>
            <person name="Moule S."/>
            <person name="Oyston P.C.F."/>
            <person name="Quail M.A."/>
            <person name="Rutherford K.M."/>
            <person name="Simmonds M."/>
            <person name="Skelton J."/>
            <person name="Stevens K."/>
            <person name="Whitehead S."/>
            <person name="Barrell B.G."/>
        </authorList>
    </citation>
    <scope>NUCLEOTIDE SEQUENCE [LARGE SCALE GENOMIC DNA]</scope>
    <source>
        <strain>CO-92 / Biovar Orientalis</strain>
    </source>
</reference>
<reference key="2">
    <citation type="journal article" date="2002" name="J. Bacteriol.">
        <title>Genome sequence of Yersinia pestis KIM.</title>
        <authorList>
            <person name="Deng W."/>
            <person name="Burland V."/>
            <person name="Plunkett G. III"/>
            <person name="Boutin A."/>
            <person name="Mayhew G.F."/>
            <person name="Liss P."/>
            <person name="Perna N.T."/>
            <person name="Rose D.J."/>
            <person name="Mau B."/>
            <person name="Zhou S."/>
            <person name="Schwartz D.C."/>
            <person name="Fetherston J.D."/>
            <person name="Lindler L.E."/>
            <person name="Brubaker R.R."/>
            <person name="Plano G.V."/>
            <person name="Straley S.C."/>
            <person name="McDonough K.A."/>
            <person name="Nilles M.L."/>
            <person name="Matson J.S."/>
            <person name="Blattner F.R."/>
            <person name="Perry R.D."/>
        </authorList>
    </citation>
    <scope>NUCLEOTIDE SEQUENCE [LARGE SCALE GENOMIC DNA]</scope>
    <source>
        <strain>KIM10+ / Biovar Mediaevalis</strain>
    </source>
</reference>
<reference key="3">
    <citation type="journal article" date="2004" name="DNA Res.">
        <title>Complete genome sequence of Yersinia pestis strain 91001, an isolate avirulent to humans.</title>
        <authorList>
            <person name="Song Y."/>
            <person name="Tong Z."/>
            <person name="Wang J."/>
            <person name="Wang L."/>
            <person name="Guo Z."/>
            <person name="Han Y."/>
            <person name="Zhang J."/>
            <person name="Pei D."/>
            <person name="Zhou D."/>
            <person name="Qin H."/>
            <person name="Pang X."/>
            <person name="Han Y."/>
            <person name="Zhai J."/>
            <person name="Li M."/>
            <person name="Cui B."/>
            <person name="Qi Z."/>
            <person name="Jin L."/>
            <person name="Dai R."/>
            <person name="Chen F."/>
            <person name="Li S."/>
            <person name="Ye C."/>
            <person name="Du Z."/>
            <person name="Lin W."/>
            <person name="Wang J."/>
            <person name="Yu J."/>
            <person name="Yang H."/>
            <person name="Wang J."/>
            <person name="Huang P."/>
            <person name="Yang R."/>
        </authorList>
    </citation>
    <scope>NUCLEOTIDE SEQUENCE [LARGE SCALE GENOMIC DNA]</scope>
    <source>
        <strain>91001 / Biovar Mediaevalis</strain>
    </source>
</reference>